<keyword id="KW-0152">Cholesterol biosynthesis</keyword>
<keyword id="KW-0153">Cholesterol metabolism</keyword>
<keyword id="KW-0963">Cytoplasm</keyword>
<keyword id="KW-0444">Lipid biosynthesis</keyword>
<keyword id="KW-0443">Lipid metabolism</keyword>
<keyword id="KW-1185">Reference proteome</keyword>
<keyword id="KW-0752">Steroid biosynthesis</keyword>
<keyword id="KW-0753">Steroid metabolism</keyword>
<keyword id="KW-0756">Sterol biosynthesis</keyword>
<keyword id="KW-1207">Sterol metabolism</keyword>
<keyword id="KW-0808">Transferase</keyword>
<reference key="1">
    <citation type="journal article" date="1990" name="Arch. Biochem. Biophys.">
        <title>Avian liver 3-hydroxy-3-methylglutaryl-CoA synthase: distinct genes encode the cholesterogenic and ketogenic isozymes.</title>
        <authorList>
            <person name="Kattar-Cooley P.A."/>
            <person name="Wang H.-H.L."/>
            <person name="Mende-Mueller L.M."/>
            <person name="Miziorko H.M."/>
        </authorList>
    </citation>
    <scope>NUCLEOTIDE SEQUENCE [MRNA]</scope>
    <source>
        <tissue>Liver</tissue>
    </source>
</reference>
<reference key="2">
    <citation type="journal article" date="1995" name="Biochim. Biophys. Acta">
        <title>Avian cytosolic 3-hydroxy-3-methylglutaryl-CoA synthase: evaluation of the role of cysteines in reaction chemistry.</title>
        <authorList>
            <person name="Misra I."/>
            <person name="Charlier H.A. Jr."/>
            <person name="Miziorko H.M."/>
        </authorList>
    </citation>
    <scope>CHARACTERIZATION</scope>
    <scope>CATALYTIC ACTIVITY</scope>
    <scope>FUNCTION</scope>
    <scope>BIOPHYSICOCHEMICAL PROPERTIES</scope>
    <scope>MUTAGENESIS OF CYS-59; CYS-69; CYS-224; CYS-232 AND CYS-268</scope>
</reference>
<accession>P23228</accession>
<proteinExistence type="evidence at protein level"/>
<feature type="chain" id="PRO_0000213751" description="Hydroxymethylglutaryl-CoA synthase, cytoplasmic">
    <location>
        <begin position="1"/>
        <end position="522"/>
    </location>
</feature>
<feature type="active site" description="Proton donor/acceptor" evidence="4">
    <location>
        <position position="95"/>
    </location>
</feature>
<feature type="active site" description="Acyl-thioester intermediate" evidence="4">
    <location>
        <position position="129"/>
    </location>
</feature>
<feature type="active site" description="Proton donor/acceptor" evidence="4">
    <location>
        <position position="264"/>
    </location>
</feature>
<feature type="binding site" evidence="2">
    <location>
        <position position="43"/>
    </location>
    <ligand>
        <name>(3S)-3-hydroxy-3-methylglutaryl-CoA</name>
        <dbReference type="ChEBI" id="CHEBI:43074"/>
    </ligand>
</feature>
<feature type="binding site" evidence="2">
    <location>
        <position position="44"/>
    </location>
    <ligand>
        <name>(3S)-3-hydroxy-3-methylglutaryl-CoA</name>
        <dbReference type="ChEBI" id="CHEBI:43074"/>
    </ligand>
</feature>
<feature type="binding site" evidence="2">
    <location>
        <position position="129"/>
    </location>
    <ligand>
        <name>(3S)-3-hydroxy-3-methylglutaryl-CoA</name>
        <dbReference type="ChEBI" id="CHEBI:43074"/>
    </ligand>
</feature>
<feature type="binding site" evidence="2">
    <location>
        <position position="167"/>
    </location>
    <ligand>
        <name>(3S)-3-hydroxy-3-methylglutaryl-CoA</name>
        <dbReference type="ChEBI" id="CHEBI:43074"/>
    </ligand>
</feature>
<feature type="binding site" evidence="2">
    <location>
        <position position="171"/>
    </location>
    <ligand>
        <name>(3S)-3-hydroxy-3-methylglutaryl-CoA</name>
        <dbReference type="ChEBI" id="CHEBI:43074"/>
    </ligand>
</feature>
<feature type="binding site" evidence="2">
    <location>
        <position position="221"/>
    </location>
    <ligand>
        <name>(3S)-3-hydroxy-3-methylglutaryl-CoA</name>
        <dbReference type="ChEBI" id="CHEBI:43074"/>
    </ligand>
</feature>
<feature type="binding site" evidence="2">
    <location>
        <position position="264"/>
    </location>
    <ligand>
        <name>(3S)-3-hydroxy-3-methylglutaryl-CoA</name>
        <dbReference type="ChEBI" id="CHEBI:43074"/>
    </ligand>
</feature>
<feature type="binding site" evidence="2">
    <location>
        <position position="273"/>
    </location>
    <ligand>
        <name>(3S)-3-hydroxy-3-methylglutaryl-CoA</name>
        <dbReference type="ChEBI" id="CHEBI:43074"/>
    </ligand>
</feature>
<feature type="binding site" evidence="2">
    <location>
        <position position="344"/>
    </location>
    <ligand>
        <name>(3S)-3-hydroxy-3-methylglutaryl-CoA</name>
        <dbReference type="ChEBI" id="CHEBI:43074"/>
    </ligand>
</feature>
<feature type="binding site" evidence="2">
    <location>
        <position position="378"/>
    </location>
    <ligand>
        <name>(3S)-3-hydroxy-3-methylglutaryl-CoA</name>
        <dbReference type="ChEBI" id="CHEBI:43074"/>
    </ligand>
</feature>
<feature type="mutagenesis site" description="Does not significantly affect biophysicochemical properties." evidence="5">
    <original>C</original>
    <variation>A</variation>
    <location>
        <position position="59"/>
    </location>
</feature>
<feature type="mutagenesis site" description="Does not significantly affect biophysicochemical properties." evidence="5">
    <original>C</original>
    <variation>A</variation>
    <location>
        <position position="69"/>
    </location>
</feature>
<feature type="mutagenesis site" description="Does not significantly affect biophysicochemical properties." evidence="5">
    <original>C</original>
    <variation>A</variation>
    <location>
        <position position="224"/>
    </location>
</feature>
<feature type="mutagenesis site" description="Does not significantly affect biophysicochemical properties." evidence="5">
    <original>C</original>
    <variation>A</variation>
    <location>
        <position position="232"/>
    </location>
</feature>
<feature type="mutagenesis site" description="Does not significantly affect biophysicochemical properties." evidence="5">
    <original>C</original>
    <variation>A</variation>
    <location>
        <position position="268"/>
    </location>
</feature>
<dbReference type="EC" id="2.3.3.10" evidence="5"/>
<dbReference type="EMBL" id="M60657">
    <property type="protein sequence ID" value="AAA62737.1"/>
    <property type="molecule type" value="mRNA"/>
</dbReference>
<dbReference type="PIR" id="S13887">
    <property type="entry name" value="S13887"/>
</dbReference>
<dbReference type="RefSeq" id="NP_990742.1">
    <property type="nucleotide sequence ID" value="NM_205411.1"/>
</dbReference>
<dbReference type="SMR" id="P23228"/>
<dbReference type="FunCoup" id="P23228">
    <property type="interactions" value="1453"/>
</dbReference>
<dbReference type="STRING" id="9031.ENSGALP00000049501"/>
<dbReference type="GlyGen" id="P23228">
    <property type="glycosylation" value="1 site"/>
</dbReference>
<dbReference type="PaxDb" id="9031-ENSGALP00000023936"/>
<dbReference type="GeneID" id="396379"/>
<dbReference type="KEGG" id="gga:396379"/>
<dbReference type="CTD" id="3157"/>
<dbReference type="VEuPathDB" id="HostDB:geneid_396379"/>
<dbReference type="eggNOG" id="KOG1393">
    <property type="taxonomic scope" value="Eukaryota"/>
</dbReference>
<dbReference type="InParanoid" id="P23228"/>
<dbReference type="OrthoDB" id="1269963at2759"/>
<dbReference type="PhylomeDB" id="P23228"/>
<dbReference type="BRENDA" id="2.3.3.10">
    <property type="organism ID" value="1306"/>
</dbReference>
<dbReference type="SABIO-RK" id="P23228"/>
<dbReference type="UniPathway" id="UPA00058">
    <property type="reaction ID" value="UER00102"/>
</dbReference>
<dbReference type="PRO" id="PR:P23228"/>
<dbReference type="Proteomes" id="UP000000539">
    <property type="component" value="Unassembled WGS sequence"/>
</dbReference>
<dbReference type="GO" id="GO:0005737">
    <property type="term" value="C:cytoplasm"/>
    <property type="evidence" value="ECO:0007669"/>
    <property type="project" value="UniProtKB-SubCell"/>
</dbReference>
<dbReference type="GO" id="GO:0004421">
    <property type="term" value="F:hydroxymethylglutaryl-CoA synthase activity"/>
    <property type="evidence" value="ECO:0000318"/>
    <property type="project" value="GO_Central"/>
</dbReference>
<dbReference type="GO" id="GO:0006084">
    <property type="term" value="P:acetyl-CoA metabolic process"/>
    <property type="evidence" value="ECO:0000318"/>
    <property type="project" value="GO_Central"/>
</dbReference>
<dbReference type="GO" id="GO:0006695">
    <property type="term" value="P:cholesterol biosynthetic process"/>
    <property type="evidence" value="ECO:0007669"/>
    <property type="project" value="UniProtKB-KW"/>
</dbReference>
<dbReference type="GO" id="GO:0010142">
    <property type="term" value="P:farnesyl diphosphate biosynthetic process, mevalonate pathway"/>
    <property type="evidence" value="ECO:0000318"/>
    <property type="project" value="GO_Central"/>
</dbReference>
<dbReference type="CDD" id="cd00827">
    <property type="entry name" value="init_cond_enzymes"/>
    <property type="match status" value="1"/>
</dbReference>
<dbReference type="FunFam" id="3.40.47.10:FF:000008">
    <property type="entry name" value="3-hydroxy-3-methylglutaryl coenzyme A synthase"/>
    <property type="match status" value="1"/>
</dbReference>
<dbReference type="Gene3D" id="3.40.47.10">
    <property type="match status" value="1"/>
</dbReference>
<dbReference type="InterPro" id="IPR000590">
    <property type="entry name" value="HMG_CoA_synt_AS"/>
</dbReference>
<dbReference type="InterPro" id="IPR013746">
    <property type="entry name" value="HMG_CoA_synt_C_dom"/>
</dbReference>
<dbReference type="InterPro" id="IPR013528">
    <property type="entry name" value="HMG_CoA_synth_N"/>
</dbReference>
<dbReference type="InterPro" id="IPR010122">
    <property type="entry name" value="HMG_CoA_synthase_euk"/>
</dbReference>
<dbReference type="InterPro" id="IPR016039">
    <property type="entry name" value="Thiolase-like"/>
</dbReference>
<dbReference type="NCBIfam" id="TIGR01833">
    <property type="entry name" value="HMG-CoA-S_euk"/>
    <property type="match status" value="1"/>
</dbReference>
<dbReference type="PANTHER" id="PTHR43323">
    <property type="entry name" value="3-HYDROXY-3-METHYLGLUTARYL COENZYME A SYNTHASE"/>
    <property type="match status" value="1"/>
</dbReference>
<dbReference type="PANTHER" id="PTHR43323:SF4">
    <property type="entry name" value="HYDROXYMETHYLGLUTARYL-COA SYNTHASE, CYTOPLASMIC"/>
    <property type="match status" value="1"/>
</dbReference>
<dbReference type="Pfam" id="PF08540">
    <property type="entry name" value="HMG_CoA_synt_C"/>
    <property type="match status" value="1"/>
</dbReference>
<dbReference type="Pfam" id="PF01154">
    <property type="entry name" value="HMG_CoA_synt_N"/>
    <property type="match status" value="1"/>
</dbReference>
<dbReference type="SUPFAM" id="SSF53901">
    <property type="entry name" value="Thiolase-like"/>
    <property type="match status" value="2"/>
</dbReference>
<dbReference type="PROSITE" id="PS01226">
    <property type="entry name" value="HMG_COA_SYNTHASE"/>
    <property type="match status" value="1"/>
</dbReference>
<evidence type="ECO:0000250" key="1">
    <source>
        <dbReference type="UniProtKB" id="P13704"/>
    </source>
</evidence>
<evidence type="ECO:0000250" key="2">
    <source>
        <dbReference type="UniProtKB" id="P54868"/>
    </source>
</evidence>
<evidence type="ECO:0000250" key="3">
    <source>
        <dbReference type="UniProtKB" id="Q01581"/>
    </source>
</evidence>
<evidence type="ECO:0000255" key="4">
    <source>
        <dbReference type="PROSITE-ProRule" id="PRU10116"/>
    </source>
</evidence>
<evidence type="ECO:0000269" key="5">
    <source>
    </source>
</evidence>
<evidence type="ECO:0000305" key="6"/>
<evidence type="ECO:0000305" key="7">
    <source>
    </source>
</evidence>
<comment type="function">
    <text evidence="5">Catalyzes the condensation of acetyl-CoA with acetoacetyl-CoA to form HMG-CoA, which is converted by HMG-CoA reductase (HMGCR) into mevalonate, a precursor for cholesterol synthesis.</text>
</comment>
<comment type="catalytic activity">
    <reaction evidence="5">
        <text>acetoacetyl-CoA + acetyl-CoA + H2O = (3S)-3-hydroxy-3-methylglutaryl-CoA + CoA + H(+)</text>
        <dbReference type="Rhea" id="RHEA:10188"/>
        <dbReference type="ChEBI" id="CHEBI:15377"/>
        <dbReference type="ChEBI" id="CHEBI:15378"/>
        <dbReference type="ChEBI" id="CHEBI:43074"/>
        <dbReference type="ChEBI" id="CHEBI:57286"/>
        <dbReference type="ChEBI" id="CHEBI:57287"/>
        <dbReference type="ChEBI" id="CHEBI:57288"/>
        <dbReference type="EC" id="2.3.3.10"/>
    </reaction>
    <physiologicalReaction direction="left-to-right" evidence="7">
        <dbReference type="Rhea" id="RHEA:10189"/>
    </physiologicalReaction>
</comment>
<comment type="biophysicochemical properties">
    <kinetics>
        <KM evidence="5">294 uM for acetyl-CoA</KM>
        <Vmax evidence="5">4.4 umol/min/mg enzyme with acetyl-CoA as substrate</Vmax>
    </kinetics>
</comment>
<comment type="pathway">
    <text>Metabolic intermediate biosynthesis; (R)-mevalonate biosynthesis; (R)-mevalonate from acetyl-CoA: step 2/3.</text>
</comment>
<comment type="subunit">
    <text evidence="3">Homodimer.</text>
</comment>
<comment type="subcellular location">
    <subcellularLocation>
        <location evidence="1">Cytoplasm</location>
    </subcellularLocation>
</comment>
<comment type="similarity">
    <text evidence="6">Belongs to the thiolase-like superfamily. HMG-CoA synthase family.</text>
</comment>
<organism>
    <name type="scientific">Gallus gallus</name>
    <name type="common">Chicken</name>
    <dbReference type="NCBI Taxonomy" id="9031"/>
    <lineage>
        <taxon>Eukaryota</taxon>
        <taxon>Metazoa</taxon>
        <taxon>Chordata</taxon>
        <taxon>Craniata</taxon>
        <taxon>Vertebrata</taxon>
        <taxon>Euteleostomi</taxon>
        <taxon>Archelosauria</taxon>
        <taxon>Archosauria</taxon>
        <taxon>Dinosauria</taxon>
        <taxon>Saurischia</taxon>
        <taxon>Theropoda</taxon>
        <taxon>Coelurosauria</taxon>
        <taxon>Aves</taxon>
        <taxon>Neognathae</taxon>
        <taxon>Galloanserae</taxon>
        <taxon>Galliformes</taxon>
        <taxon>Phasianidae</taxon>
        <taxon>Phasianinae</taxon>
        <taxon>Gallus</taxon>
    </lineage>
</organism>
<protein>
    <recommendedName>
        <fullName>Hydroxymethylglutaryl-CoA synthase, cytoplasmic</fullName>
        <shortName>HMG-CoA synthase</shortName>
        <ecNumber evidence="5">2.3.3.10</ecNumber>
    </recommendedName>
    <alternativeName>
        <fullName>3-hydroxy-3-methylglutaryl coenzyme A synthase</fullName>
    </alternativeName>
</protein>
<gene>
    <name type="primary">HMGCS1</name>
    <name type="synonym">HMGCS</name>
</gene>
<sequence>MPGSLPVNTESCWPKDVGIVALEIYFPSQYVDQTELEKYDGVDAGKYTIGLGQSKMGFCSDREDINSLCLTVVQKLMERNSLSYDCIGRLEVGTETIIDKSKSVKTVLMQLFEESGNTDVEGIDTTNACYGGTAALFNAINWIESSSWDGRYALVVAGDIAVYATGNARPTGGAGAVAMLVGSNAPLIFERGLRGTHMQHAYDFYKPDMVSEYPVVDGKLSIQCYLSALDRCYSVYRNKIHAQWQKEGTDRGFTLNDFGFMIFHSPYCKLVQKSVARLLLNDFLSDQNAETANGVFSGLEAFRDVKLEDTYFDRDVEKAFMKASAELFNQKTKASLLVSNQNGNMYTPSVYGCLASLLAQYSPEHLAGQRISEFSYGSGFAATLYSIRVTQDATPGSALDKITASLSDLKARLDSRKCIAPDVFAENMKIRQETHHLANYIPQCSVEDLFEGTWYLVRVDEKHRRTYARRPVMGDGPLEAGVEVVHPGIVHEHIPSPAKKVPRIPATTESEGVTVAISNGVH</sequence>
<name>HMCS1_CHICK</name>